<accession>Q3TAS6</accession>
<accession>Q3TFU1</accession>
<accession>Q5UCC3</accession>
<accession>Q5UCC5</accession>
<accession>Q8VCD8</accession>
<accession>Q99JJ8</accession>
<gene>
    <name type="primary">Emc10</name>
    <name type="synonym">Hsm1</name>
    <name type="synonym">Inm02</name>
</gene>
<proteinExistence type="evidence at transcript level"/>
<evidence type="ECO:0000250" key="1">
    <source>
        <dbReference type="UniProtKB" id="Q5UCC4"/>
    </source>
</evidence>
<evidence type="ECO:0000255" key="2"/>
<evidence type="ECO:0000269" key="3">
    <source>
    </source>
</evidence>
<evidence type="ECO:0000303" key="4">
    <source>
    </source>
</evidence>
<evidence type="ECO:0000305" key="5"/>
<protein>
    <recommendedName>
        <fullName>ER membrane protein complex subunit 10</fullName>
    </recommendedName>
    <alternativeName>
        <fullName>Hematopoietic signal peptide-containing membrane domain-containing protein 1</fullName>
    </alternativeName>
</protein>
<keyword id="KW-0025">Alternative splicing</keyword>
<keyword id="KW-0037">Angiogenesis</keyword>
<keyword id="KW-0256">Endoplasmic reticulum</keyword>
<keyword id="KW-0472">Membrane</keyword>
<keyword id="KW-1185">Reference proteome</keyword>
<keyword id="KW-0964">Secreted</keyword>
<keyword id="KW-0732">Signal</keyword>
<keyword id="KW-0812">Transmembrane</keyword>
<keyword id="KW-1133">Transmembrane helix</keyword>
<dbReference type="EMBL" id="AY761096">
    <property type="protein sequence ID" value="AAV30544.1"/>
    <property type="molecule type" value="mRNA"/>
</dbReference>
<dbReference type="EMBL" id="AY761098">
    <property type="protein sequence ID" value="AAV30546.1"/>
    <property type="molecule type" value="mRNA"/>
</dbReference>
<dbReference type="EMBL" id="AK169010">
    <property type="protein sequence ID" value="BAE40807.1"/>
    <property type="status" value="ALT_INIT"/>
    <property type="molecule type" value="mRNA"/>
</dbReference>
<dbReference type="EMBL" id="AK171657">
    <property type="protein sequence ID" value="BAE42592.1"/>
    <property type="status" value="ALT_INIT"/>
    <property type="molecule type" value="mRNA"/>
</dbReference>
<dbReference type="EMBL" id="BC006065">
    <property type="protein sequence ID" value="AAH06065.1"/>
    <property type="molecule type" value="mRNA"/>
</dbReference>
<dbReference type="EMBL" id="BC020179">
    <property type="protein sequence ID" value="AAH20179.1"/>
    <property type="molecule type" value="mRNA"/>
</dbReference>
<dbReference type="CCDS" id="CCDS52231.2">
    <molecule id="Q3TAS6-1"/>
</dbReference>
<dbReference type="RefSeq" id="NP_932108.3">
    <molecule id="Q3TAS6-1"/>
    <property type="nucleotide sequence ID" value="NM_197991.3"/>
</dbReference>
<dbReference type="SMR" id="Q3TAS6"/>
<dbReference type="BioGRID" id="213613">
    <property type="interactions" value="4"/>
</dbReference>
<dbReference type="ComplexPortal" id="CPX-5882">
    <property type="entry name" value="Endoplasmic reticulum membrane complex, EMC8 variant"/>
</dbReference>
<dbReference type="ComplexPortal" id="CPX-5883">
    <property type="entry name" value="Endoplasmic reticulum membrane complex, EMC9 variant"/>
</dbReference>
<dbReference type="FunCoup" id="Q3TAS6">
    <property type="interactions" value="633"/>
</dbReference>
<dbReference type="STRING" id="10090.ENSMUSP00000159045"/>
<dbReference type="GlyConnect" id="2303">
    <property type="glycosylation" value="6 N-Linked glycans (1 site)"/>
</dbReference>
<dbReference type="GlyCosmos" id="Q3TAS6">
    <property type="glycosylation" value="1 site, 6 glycans"/>
</dbReference>
<dbReference type="GlyGen" id="Q3TAS6">
    <property type="glycosylation" value="1 site, 7 N-linked glycans (1 site)"/>
</dbReference>
<dbReference type="iPTMnet" id="Q3TAS6"/>
<dbReference type="PhosphoSitePlus" id="Q3TAS6"/>
<dbReference type="jPOST" id="Q3TAS6"/>
<dbReference type="PaxDb" id="10090-ENSMUSP00000008284"/>
<dbReference type="PeptideAtlas" id="Q3TAS6"/>
<dbReference type="ProteomicsDB" id="275607">
    <molecule id="Q3TAS6-1"/>
</dbReference>
<dbReference type="ProteomicsDB" id="275608">
    <molecule id="Q3TAS6-2"/>
</dbReference>
<dbReference type="Pumba" id="Q3TAS6"/>
<dbReference type="Antibodypedia" id="53684">
    <property type="antibodies" value="74 antibodies from 17 providers"/>
</dbReference>
<dbReference type="Ensembl" id="ENSMUST00000118515.9">
    <molecule id="Q3TAS6-2"/>
    <property type="protein sequence ID" value="ENSMUSP00000113141.4"/>
    <property type="gene ID" value="ENSMUSG00000008140.19"/>
</dbReference>
<dbReference type="Ensembl" id="ENSMUST00000118808.9">
    <molecule id="Q3TAS6-1"/>
    <property type="protein sequence ID" value="ENSMUSP00000113509.4"/>
    <property type="gene ID" value="ENSMUSG00000008140.19"/>
</dbReference>
<dbReference type="GeneID" id="69683"/>
<dbReference type="KEGG" id="mmu:69683"/>
<dbReference type="UCSC" id="uc009gpq.2">
    <molecule id="Q3TAS6-2"/>
    <property type="organism name" value="mouse"/>
</dbReference>
<dbReference type="UCSC" id="uc012fjp.1">
    <molecule id="Q3TAS6-1"/>
    <property type="organism name" value="mouse"/>
</dbReference>
<dbReference type="AGR" id="MGI:1916933"/>
<dbReference type="CTD" id="284361"/>
<dbReference type="MGI" id="MGI:1916933">
    <property type="gene designation" value="Emc10"/>
</dbReference>
<dbReference type="VEuPathDB" id="HostDB:ENSMUSG00000008140"/>
<dbReference type="eggNOG" id="KOG4827">
    <property type="taxonomic scope" value="Eukaryota"/>
</dbReference>
<dbReference type="GeneTree" id="ENSGT00390000004520"/>
<dbReference type="HOGENOM" id="CLU_065716_0_0_1"/>
<dbReference type="InParanoid" id="Q3TAS6"/>
<dbReference type="OrthoDB" id="1894652at2759"/>
<dbReference type="PhylomeDB" id="Q3TAS6"/>
<dbReference type="TreeFam" id="TF314052"/>
<dbReference type="BioGRID-ORCS" id="69683">
    <property type="hits" value="1 hit in 77 CRISPR screens"/>
</dbReference>
<dbReference type="CD-CODE" id="CE726F99">
    <property type="entry name" value="Postsynaptic density"/>
</dbReference>
<dbReference type="ChiTaRS" id="Emc10">
    <property type="organism name" value="mouse"/>
</dbReference>
<dbReference type="PRO" id="PR:Q3TAS6"/>
<dbReference type="Proteomes" id="UP000000589">
    <property type="component" value="Chromosome 7"/>
</dbReference>
<dbReference type="RNAct" id="Q3TAS6">
    <property type="molecule type" value="protein"/>
</dbReference>
<dbReference type="Bgee" id="ENSMUSG00000008140">
    <property type="expression patterns" value="Expressed in facial nucleus and 262 other cell types or tissues"/>
</dbReference>
<dbReference type="ExpressionAtlas" id="Q3TAS6">
    <property type="expression patterns" value="baseline and differential"/>
</dbReference>
<dbReference type="GO" id="GO:0072546">
    <property type="term" value="C:EMC complex"/>
    <property type="evidence" value="ECO:0000250"/>
    <property type="project" value="UniProtKB"/>
</dbReference>
<dbReference type="GO" id="GO:0005789">
    <property type="term" value="C:endoplasmic reticulum membrane"/>
    <property type="evidence" value="ECO:0000250"/>
    <property type="project" value="UniProtKB"/>
</dbReference>
<dbReference type="GO" id="GO:0005576">
    <property type="term" value="C:extracellular region"/>
    <property type="evidence" value="ECO:0000314"/>
    <property type="project" value="UniProtKB"/>
</dbReference>
<dbReference type="GO" id="GO:0016020">
    <property type="term" value="C:membrane"/>
    <property type="evidence" value="ECO:0000250"/>
    <property type="project" value="UniProtKB"/>
</dbReference>
<dbReference type="GO" id="GO:0001525">
    <property type="term" value="P:angiogenesis"/>
    <property type="evidence" value="ECO:0007669"/>
    <property type="project" value="UniProtKB-KW"/>
</dbReference>
<dbReference type="GO" id="GO:0045766">
    <property type="term" value="P:positive regulation of angiogenesis"/>
    <property type="evidence" value="ECO:0000315"/>
    <property type="project" value="UniProtKB"/>
</dbReference>
<dbReference type="GO" id="GO:0010595">
    <property type="term" value="P:positive regulation of endothelial cell migration"/>
    <property type="evidence" value="ECO:0000314"/>
    <property type="project" value="UniProtKB"/>
</dbReference>
<dbReference type="GO" id="GO:0001938">
    <property type="term" value="P:positive regulation of endothelial cell proliferation"/>
    <property type="evidence" value="ECO:0000314"/>
    <property type="project" value="UniProtKB"/>
</dbReference>
<dbReference type="GO" id="GO:0045050">
    <property type="term" value="P:protein insertion into ER membrane by stop-transfer membrane-anchor sequence"/>
    <property type="evidence" value="ECO:0000250"/>
    <property type="project" value="UniProtKB"/>
</dbReference>
<dbReference type="GO" id="GO:0071816">
    <property type="term" value="P:tail-anchored membrane protein insertion into ER membrane"/>
    <property type="evidence" value="ECO:0000250"/>
    <property type="project" value="UniProtKB"/>
</dbReference>
<dbReference type="CDD" id="cd22209">
    <property type="entry name" value="EMC10"/>
    <property type="match status" value="1"/>
</dbReference>
<dbReference type="PANTHER" id="PTHR21397">
    <property type="entry name" value="CHROMATIN COMPLEXES SUBUNIT BAP18-RELATED"/>
    <property type="match status" value="1"/>
</dbReference>
<dbReference type="PANTHER" id="PTHR21397:SF4">
    <property type="entry name" value="ER MEMBRANE PROTEIN COMPLEX SUBUNIT 10"/>
    <property type="match status" value="1"/>
</dbReference>
<dbReference type="Pfam" id="PF21203">
    <property type="entry name" value="ECM10"/>
    <property type="match status" value="1"/>
</dbReference>
<sequence>MVAAGAGVTRLLVLLLMVAAAPSRARGSGCRVGASARGTGADGREAEGCGTVALLLEHSFELGDGANFQKRGLLLWNQQDGTLSATQRQLSEEERGRLRDVAAVNGLYRVRVPRRPGTLDGSEAGGHVSSFVPACSLVESHLSDQLTLHVDVAGNVVGLSVVVYPGGCRGSEVEDEDLELFNTSVQLRPPSTAPGPETAAFIERLEMEQAQKAKNPQEQKSFFAKYWMYIIPVVLFLMMSGAPDAGGQGGGGGGGSSR</sequence>
<name>EMC10_MOUSE</name>
<comment type="function">
    <text evidence="1 3">Part of the endoplasmic reticulum membrane protein complex (EMC) that enables the energy-independent insertion into endoplasmic reticulum membranes of newly synthesized membrane proteins. Preferentially accommodates proteins with transmembrane domains that are weakly hydrophobic or contain destabilizing features such as charged and aromatic residues. Involved in the cotranslational insertion of multi-pass membrane proteins in which stop-transfer membrane-anchor sequences become ER membrane spanning helices. It is also required for the post-translational insertion of tail-anchored/TA proteins in endoplasmic reticulum membranes. By mediating the proper cotranslational insertion of N-terminal transmembrane domains in an N-exo topology, with translocated N-terminus in the lumen of the ER, controls the topology of multi-pass membrane proteins like the G protein-coupled receptors (By similarity). By regulating the insertion of various proteins in membranes, it is indirectly involved in many cellular processes. Promotes angiogenesis and tissue repair in the heart after myocardial infarction. Stimulates cardiac endothelial cell migration and outgrowth via the activation of p38 MAPK, PAK and MAPK2 signaling pathways (PubMed:28931551).</text>
</comment>
<comment type="subunit">
    <text evidence="1">Component of the ER membrane protein complex (EMC).</text>
</comment>
<comment type="subcellular location">
    <molecule>Isoform 2</molecule>
    <subcellularLocation>
        <location evidence="3">Secreted</location>
    </subcellularLocation>
</comment>
<comment type="subcellular location">
    <molecule>Isoform 1</molecule>
    <subcellularLocation>
        <location evidence="1">Endoplasmic reticulum membrane</location>
        <topology evidence="1">Single-pass type I membrane protein</topology>
    </subcellularLocation>
</comment>
<comment type="alternative products">
    <event type="alternative splicing"/>
    <isoform>
        <id>Q3TAS6-1</id>
        <name>1</name>
        <sequence type="displayed"/>
    </isoform>
    <isoform>
        <id>Q3TAS6-2</id>
        <name>2</name>
        <name>Hematopoietic signal peptide-containing secreted protein 1</name>
        <name>HSS1</name>
        <sequence type="described" ref="VSP_030475"/>
    </isoform>
</comment>
<comment type="tissue specificity">
    <text evidence="3">Up-regulated in the left ventricle 3 days after myocardial infarction (MI). Expressed predominantly by monocytes and macrophages from bone marrow, spleen, and peripheral blood 3 days after MI (protein level).</text>
</comment>
<comment type="disruption phenotype">
    <text evidence="3">Knockout mice show no cardiovascular phenotype at baseline. After myocardial infarction however, capillarization of the infarct border zone is impaired and the animals develop larger infarct scars and more pronounced left ventricular remodeling and systolic dysfunction compared with wild-type mice.</text>
</comment>
<comment type="similarity">
    <text evidence="5">Belongs to the EMC10 family.</text>
</comment>
<comment type="sequence caution" evidence="5">
    <conflict type="erroneous initiation">
        <sequence resource="EMBL-CDS" id="BAE40807"/>
    </conflict>
</comment>
<comment type="sequence caution" evidence="5">
    <conflict type="erroneous initiation">
        <sequence resource="EMBL-CDS" id="BAE42592"/>
    </conflict>
</comment>
<feature type="signal peptide" evidence="1">
    <location>
        <begin position="1"/>
        <end position="25"/>
    </location>
</feature>
<feature type="chain" id="PRO_0000315049" description="ER membrane protein complex subunit 10">
    <location>
        <begin position="26"/>
        <end position="258"/>
    </location>
</feature>
<feature type="topological domain" description="Lumenal" evidence="1">
    <location>
        <begin position="26"/>
        <end position="221"/>
    </location>
</feature>
<feature type="transmembrane region" description="Helical" evidence="2">
    <location>
        <begin position="222"/>
        <end position="242"/>
    </location>
</feature>
<feature type="topological domain" description="Cytoplasmic" evidence="1">
    <location>
        <begin position="243"/>
        <end position="258"/>
    </location>
</feature>
<feature type="splice variant" id="VSP_030475" description="In isoform 2." evidence="4">
    <original>MYIIPVVLFLMMSGAPDAGGQGGGGGGGSSR</original>
    <variation>HLILGGAVLLTALRPAAPGPAPAPTEA</variation>
    <location>
        <begin position="228"/>
        <end position="258"/>
    </location>
</feature>
<feature type="sequence conflict" description="In Ref. 2; BAE42592 and 3; AAH20179." evidence="5" ref="2 3">
    <original>L</original>
    <variation>S</variation>
    <location>
        <position position="73"/>
    </location>
</feature>
<organism>
    <name type="scientific">Mus musculus</name>
    <name type="common">Mouse</name>
    <dbReference type="NCBI Taxonomy" id="10090"/>
    <lineage>
        <taxon>Eukaryota</taxon>
        <taxon>Metazoa</taxon>
        <taxon>Chordata</taxon>
        <taxon>Craniata</taxon>
        <taxon>Vertebrata</taxon>
        <taxon>Euteleostomi</taxon>
        <taxon>Mammalia</taxon>
        <taxon>Eutheria</taxon>
        <taxon>Euarchontoglires</taxon>
        <taxon>Glires</taxon>
        <taxon>Rodentia</taxon>
        <taxon>Myomorpha</taxon>
        <taxon>Muroidea</taxon>
        <taxon>Muridae</taxon>
        <taxon>Murinae</taxon>
        <taxon>Mus</taxon>
        <taxon>Mus</taxon>
    </lineage>
</organism>
<reference key="1">
    <citation type="journal article" date="2011" name="J. Neurooncol.">
        <title>hHSS1: a novel secreted factor and suppressor of glioma growth located at chromosome 19q13.33.</title>
        <authorList>
            <person name="Junes-Gill K.S."/>
            <person name="Gallaher T.K."/>
            <person name="Gluzman-Poltorak Z."/>
            <person name="Miller J.D."/>
            <person name="Wheeler C.J."/>
            <person name="Fan X."/>
            <person name="Basile L.A."/>
        </authorList>
    </citation>
    <scope>NUCLEOTIDE SEQUENCE [MRNA] (ISOFORMS 1 AND 2)</scope>
    <source>
        <strain>C57BL/6J</strain>
        <tissue>Bone marrow</tissue>
    </source>
</reference>
<reference key="2">
    <citation type="journal article" date="2005" name="Science">
        <title>The transcriptional landscape of the mammalian genome.</title>
        <authorList>
            <person name="Carninci P."/>
            <person name="Kasukawa T."/>
            <person name="Katayama S."/>
            <person name="Gough J."/>
            <person name="Frith M.C."/>
            <person name="Maeda N."/>
            <person name="Oyama R."/>
            <person name="Ravasi T."/>
            <person name="Lenhard B."/>
            <person name="Wells C."/>
            <person name="Kodzius R."/>
            <person name="Shimokawa K."/>
            <person name="Bajic V.B."/>
            <person name="Brenner S.E."/>
            <person name="Batalov S."/>
            <person name="Forrest A.R."/>
            <person name="Zavolan M."/>
            <person name="Davis M.J."/>
            <person name="Wilming L.G."/>
            <person name="Aidinis V."/>
            <person name="Allen J.E."/>
            <person name="Ambesi-Impiombato A."/>
            <person name="Apweiler R."/>
            <person name="Aturaliya R.N."/>
            <person name="Bailey T.L."/>
            <person name="Bansal M."/>
            <person name="Baxter L."/>
            <person name="Beisel K.W."/>
            <person name="Bersano T."/>
            <person name="Bono H."/>
            <person name="Chalk A.M."/>
            <person name="Chiu K.P."/>
            <person name="Choudhary V."/>
            <person name="Christoffels A."/>
            <person name="Clutterbuck D.R."/>
            <person name="Crowe M.L."/>
            <person name="Dalla E."/>
            <person name="Dalrymple B.P."/>
            <person name="de Bono B."/>
            <person name="Della Gatta G."/>
            <person name="di Bernardo D."/>
            <person name="Down T."/>
            <person name="Engstrom P."/>
            <person name="Fagiolini M."/>
            <person name="Faulkner G."/>
            <person name="Fletcher C.F."/>
            <person name="Fukushima T."/>
            <person name="Furuno M."/>
            <person name="Futaki S."/>
            <person name="Gariboldi M."/>
            <person name="Georgii-Hemming P."/>
            <person name="Gingeras T.R."/>
            <person name="Gojobori T."/>
            <person name="Green R.E."/>
            <person name="Gustincich S."/>
            <person name="Harbers M."/>
            <person name="Hayashi Y."/>
            <person name="Hensch T.K."/>
            <person name="Hirokawa N."/>
            <person name="Hill D."/>
            <person name="Huminiecki L."/>
            <person name="Iacono M."/>
            <person name="Ikeo K."/>
            <person name="Iwama A."/>
            <person name="Ishikawa T."/>
            <person name="Jakt M."/>
            <person name="Kanapin A."/>
            <person name="Katoh M."/>
            <person name="Kawasawa Y."/>
            <person name="Kelso J."/>
            <person name="Kitamura H."/>
            <person name="Kitano H."/>
            <person name="Kollias G."/>
            <person name="Krishnan S.P."/>
            <person name="Kruger A."/>
            <person name="Kummerfeld S.K."/>
            <person name="Kurochkin I.V."/>
            <person name="Lareau L.F."/>
            <person name="Lazarevic D."/>
            <person name="Lipovich L."/>
            <person name="Liu J."/>
            <person name="Liuni S."/>
            <person name="McWilliam S."/>
            <person name="Madan Babu M."/>
            <person name="Madera M."/>
            <person name="Marchionni L."/>
            <person name="Matsuda H."/>
            <person name="Matsuzawa S."/>
            <person name="Miki H."/>
            <person name="Mignone F."/>
            <person name="Miyake S."/>
            <person name="Morris K."/>
            <person name="Mottagui-Tabar S."/>
            <person name="Mulder N."/>
            <person name="Nakano N."/>
            <person name="Nakauchi H."/>
            <person name="Ng P."/>
            <person name="Nilsson R."/>
            <person name="Nishiguchi S."/>
            <person name="Nishikawa S."/>
            <person name="Nori F."/>
            <person name="Ohara O."/>
            <person name="Okazaki Y."/>
            <person name="Orlando V."/>
            <person name="Pang K.C."/>
            <person name="Pavan W.J."/>
            <person name="Pavesi G."/>
            <person name="Pesole G."/>
            <person name="Petrovsky N."/>
            <person name="Piazza S."/>
            <person name="Reed J."/>
            <person name="Reid J.F."/>
            <person name="Ring B.Z."/>
            <person name="Ringwald M."/>
            <person name="Rost B."/>
            <person name="Ruan Y."/>
            <person name="Salzberg S.L."/>
            <person name="Sandelin A."/>
            <person name="Schneider C."/>
            <person name="Schoenbach C."/>
            <person name="Sekiguchi K."/>
            <person name="Semple C.A."/>
            <person name="Seno S."/>
            <person name="Sessa L."/>
            <person name="Sheng Y."/>
            <person name="Shibata Y."/>
            <person name="Shimada H."/>
            <person name="Shimada K."/>
            <person name="Silva D."/>
            <person name="Sinclair B."/>
            <person name="Sperling S."/>
            <person name="Stupka E."/>
            <person name="Sugiura K."/>
            <person name="Sultana R."/>
            <person name="Takenaka Y."/>
            <person name="Taki K."/>
            <person name="Tammoja K."/>
            <person name="Tan S.L."/>
            <person name="Tang S."/>
            <person name="Taylor M.S."/>
            <person name="Tegner J."/>
            <person name="Teichmann S.A."/>
            <person name="Ueda H.R."/>
            <person name="van Nimwegen E."/>
            <person name="Verardo R."/>
            <person name="Wei C.L."/>
            <person name="Yagi K."/>
            <person name="Yamanishi H."/>
            <person name="Zabarovsky E."/>
            <person name="Zhu S."/>
            <person name="Zimmer A."/>
            <person name="Hide W."/>
            <person name="Bult C."/>
            <person name="Grimmond S.M."/>
            <person name="Teasdale R.D."/>
            <person name="Liu E.T."/>
            <person name="Brusic V."/>
            <person name="Quackenbush J."/>
            <person name="Wahlestedt C."/>
            <person name="Mattick J.S."/>
            <person name="Hume D.A."/>
            <person name="Kai C."/>
            <person name="Sasaki D."/>
            <person name="Tomaru Y."/>
            <person name="Fukuda S."/>
            <person name="Kanamori-Katayama M."/>
            <person name="Suzuki M."/>
            <person name="Aoki J."/>
            <person name="Arakawa T."/>
            <person name="Iida J."/>
            <person name="Imamura K."/>
            <person name="Itoh M."/>
            <person name="Kato T."/>
            <person name="Kawaji H."/>
            <person name="Kawagashira N."/>
            <person name="Kawashima T."/>
            <person name="Kojima M."/>
            <person name="Kondo S."/>
            <person name="Konno H."/>
            <person name="Nakano K."/>
            <person name="Ninomiya N."/>
            <person name="Nishio T."/>
            <person name="Okada M."/>
            <person name="Plessy C."/>
            <person name="Shibata K."/>
            <person name="Shiraki T."/>
            <person name="Suzuki S."/>
            <person name="Tagami M."/>
            <person name="Waki K."/>
            <person name="Watahiki A."/>
            <person name="Okamura-Oho Y."/>
            <person name="Suzuki H."/>
            <person name="Kawai J."/>
            <person name="Hayashizaki Y."/>
        </authorList>
    </citation>
    <scope>NUCLEOTIDE SEQUENCE [LARGE SCALE MRNA] (ISOFORM 1)</scope>
    <source>
        <strain>C57BL/6J</strain>
        <strain>NOD</strain>
        <tissue>Heart</tissue>
        <tissue>Spleen</tissue>
    </source>
</reference>
<reference key="3">
    <citation type="journal article" date="2004" name="Genome Res.">
        <title>The status, quality, and expansion of the NIH full-length cDNA project: the Mammalian Gene Collection (MGC).</title>
        <authorList>
            <consortium name="The MGC Project Team"/>
        </authorList>
    </citation>
    <scope>NUCLEOTIDE SEQUENCE [LARGE SCALE MRNA] (ISOFORM 1)</scope>
    <source>
        <strain>Czech II</strain>
        <strain>FVB/N</strain>
        <tissue>Mammary tumor</tissue>
        <tissue>Salivary gland</tissue>
    </source>
</reference>
<reference key="4">
    <citation type="journal article" date="2017" name="Circulation">
        <title>EMC10 (endoplasmic reticulum membrane protein complex subunit 10) is a bone marrow-derived angiogenic growth factor promoting tissue repair after myocardial infarction.</title>
        <authorList>
            <person name="Reboll M.R."/>
            <person name="Korf-Klingebiel M."/>
            <person name="Klede S."/>
            <person name="Polten F."/>
            <person name="Brinkmann E."/>
            <person name="Reimann I."/>
            <person name="Schoenfeld H.J."/>
            <person name="Bobadilla M."/>
            <person name="Faix J."/>
            <person name="Kensah G."/>
            <person name="Gruh I."/>
            <person name="Klintschar M."/>
            <person name="Gaestel M."/>
            <person name="Niessen H.W."/>
            <person name="Pich A."/>
            <person name="Bauersachs J."/>
            <person name="Gogos J.A."/>
            <person name="Wang Y."/>
            <person name="Wollert K.C."/>
        </authorList>
    </citation>
    <scope>FUNCTION</scope>
    <scope>SUBCELLULAR LOCATION</scope>
    <scope>TISSUE SPECIFICITY</scope>
    <scope>DISRUPTION PHENOTYPE</scope>
</reference>